<organism>
    <name type="scientific">Staphylococcus haemolyticus (strain JCSC1435)</name>
    <dbReference type="NCBI Taxonomy" id="279808"/>
    <lineage>
        <taxon>Bacteria</taxon>
        <taxon>Bacillati</taxon>
        <taxon>Bacillota</taxon>
        <taxon>Bacilli</taxon>
        <taxon>Bacillales</taxon>
        <taxon>Staphylococcaceae</taxon>
        <taxon>Staphylococcus</taxon>
    </lineage>
</organism>
<keyword id="KW-0028">Amino-acid biosynthesis</keyword>
<keyword id="KW-0963">Cytoplasm</keyword>
<keyword id="KW-0521">NADP</keyword>
<keyword id="KW-0560">Oxidoreductase</keyword>
<keyword id="KW-0641">Proline biosynthesis</keyword>
<sequence>MKLVFYGAGNMAQAIFKGIINSKKLKSHDIYLTNKSNEEALKNFAEELGVEYSYDDEKLLQDADYVFLGSKPYDFEKVAQRIQPYINENNRFISIMAGLPINYIQEQLQVENPIARIMPNTNAQVGHSVTGISFSGNFGPKSKEEVNDLVNAFGSVIEVDEDHLHQVTAITGSGPAFLYHVFEQYVKAGTDLGLEKDQVEESIKNLIIGTSKMIERSDLSMEQLRKNITSKGGTTQAGLNALAQHDIEAIFKDCLNAAVHRSVELSKNEDN</sequence>
<evidence type="ECO:0000255" key="1">
    <source>
        <dbReference type="HAMAP-Rule" id="MF_01925"/>
    </source>
</evidence>
<proteinExistence type="inferred from homology"/>
<dbReference type="EC" id="1.5.1.2" evidence="1"/>
<dbReference type="EMBL" id="AP006716">
    <property type="protein sequence ID" value="BAE04722.1"/>
    <property type="molecule type" value="Genomic_DNA"/>
</dbReference>
<dbReference type="RefSeq" id="WP_011275709.1">
    <property type="nucleotide sequence ID" value="NC_007168.1"/>
</dbReference>
<dbReference type="SMR" id="Q4L6K3"/>
<dbReference type="GeneID" id="93780811"/>
<dbReference type="KEGG" id="sha:SH1413"/>
<dbReference type="eggNOG" id="COG0345">
    <property type="taxonomic scope" value="Bacteria"/>
</dbReference>
<dbReference type="HOGENOM" id="CLU_042344_0_1_9"/>
<dbReference type="OrthoDB" id="9805754at2"/>
<dbReference type="UniPathway" id="UPA00098">
    <property type="reaction ID" value="UER00361"/>
</dbReference>
<dbReference type="Proteomes" id="UP000000543">
    <property type="component" value="Chromosome"/>
</dbReference>
<dbReference type="GO" id="GO:0005737">
    <property type="term" value="C:cytoplasm"/>
    <property type="evidence" value="ECO:0007669"/>
    <property type="project" value="UniProtKB-SubCell"/>
</dbReference>
<dbReference type="GO" id="GO:0004735">
    <property type="term" value="F:pyrroline-5-carboxylate reductase activity"/>
    <property type="evidence" value="ECO:0007669"/>
    <property type="project" value="UniProtKB-UniRule"/>
</dbReference>
<dbReference type="GO" id="GO:0055129">
    <property type="term" value="P:L-proline biosynthetic process"/>
    <property type="evidence" value="ECO:0007669"/>
    <property type="project" value="UniProtKB-UniRule"/>
</dbReference>
<dbReference type="FunFam" id="1.10.3730.10:FF:000001">
    <property type="entry name" value="Pyrroline-5-carboxylate reductase"/>
    <property type="match status" value="1"/>
</dbReference>
<dbReference type="Gene3D" id="3.40.50.720">
    <property type="entry name" value="NAD(P)-binding Rossmann-like Domain"/>
    <property type="match status" value="1"/>
</dbReference>
<dbReference type="Gene3D" id="1.10.3730.10">
    <property type="entry name" value="ProC C-terminal domain-like"/>
    <property type="match status" value="1"/>
</dbReference>
<dbReference type="HAMAP" id="MF_01925">
    <property type="entry name" value="P5C_reductase"/>
    <property type="match status" value="1"/>
</dbReference>
<dbReference type="InterPro" id="IPR008927">
    <property type="entry name" value="6-PGluconate_DH-like_C_sf"/>
</dbReference>
<dbReference type="InterPro" id="IPR036291">
    <property type="entry name" value="NAD(P)-bd_dom_sf"/>
</dbReference>
<dbReference type="InterPro" id="IPR028939">
    <property type="entry name" value="P5C_Rdtase_cat_N"/>
</dbReference>
<dbReference type="InterPro" id="IPR029036">
    <property type="entry name" value="P5CR_dimer"/>
</dbReference>
<dbReference type="InterPro" id="IPR000304">
    <property type="entry name" value="Pyrroline-COOH_reductase"/>
</dbReference>
<dbReference type="NCBIfam" id="TIGR00112">
    <property type="entry name" value="proC"/>
    <property type="match status" value="1"/>
</dbReference>
<dbReference type="PANTHER" id="PTHR11645">
    <property type="entry name" value="PYRROLINE-5-CARBOXYLATE REDUCTASE"/>
    <property type="match status" value="1"/>
</dbReference>
<dbReference type="PANTHER" id="PTHR11645:SF0">
    <property type="entry name" value="PYRROLINE-5-CARBOXYLATE REDUCTASE 3"/>
    <property type="match status" value="1"/>
</dbReference>
<dbReference type="Pfam" id="PF03807">
    <property type="entry name" value="F420_oxidored"/>
    <property type="match status" value="1"/>
</dbReference>
<dbReference type="Pfam" id="PF14748">
    <property type="entry name" value="P5CR_dimer"/>
    <property type="match status" value="1"/>
</dbReference>
<dbReference type="PIRSF" id="PIRSF000193">
    <property type="entry name" value="Pyrrol-5-carb_rd"/>
    <property type="match status" value="1"/>
</dbReference>
<dbReference type="SUPFAM" id="SSF48179">
    <property type="entry name" value="6-phosphogluconate dehydrogenase C-terminal domain-like"/>
    <property type="match status" value="1"/>
</dbReference>
<dbReference type="SUPFAM" id="SSF51735">
    <property type="entry name" value="NAD(P)-binding Rossmann-fold domains"/>
    <property type="match status" value="1"/>
</dbReference>
<accession>Q4L6K3</accession>
<feature type="chain" id="PRO_0000187306" description="Pyrroline-5-carboxylate reductase">
    <location>
        <begin position="1"/>
        <end position="271"/>
    </location>
</feature>
<name>P5CR_STAHJ</name>
<reference key="1">
    <citation type="journal article" date="2005" name="J. Bacteriol.">
        <title>Whole-genome sequencing of Staphylococcus haemolyticus uncovers the extreme plasticity of its genome and the evolution of human-colonizing staphylococcal species.</title>
        <authorList>
            <person name="Takeuchi F."/>
            <person name="Watanabe S."/>
            <person name="Baba T."/>
            <person name="Yuzawa H."/>
            <person name="Ito T."/>
            <person name="Morimoto Y."/>
            <person name="Kuroda M."/>
            <person name="Cui L."/>
            <person name="Takahashi M."/>
            <person name="Ankai A."/>
            <person name="Baba S."/>
            <person name="Fukui S."/>
            <person name="Lee J.C."/>
            <person name="Hiramatsu K."/>
        </authorList>
    </citation>
    <scope>NUCLEOTIDE SEQUENCE [LARGE SCALE GENOMIC DNA]</scope>
    <source>
        <strain>JCSC1435</strain>
    </source>
</reference>
<protein>
    <recommendedName>
        <fullName evidence="1">Pyrroline-5-carboxylate reductase</fullName>
        <shortName evidence="1">P5C reductase</shortName>
        <shortName evidence="1">P5CR</shortName>
        <ecNumber evidence="1">1.5.1.2</ecNumber>
    </recommendedName>
    <alternativeName>
        <fullName evidence="1">PCA reductase</fullName>
    </alternativeName>
</protein>
<gene>
    <name evidence="1" type="primary">proC</name>
    <name type="ordered locus">SH1413</name>
</gene>
<comment type="function">
    <text evidence="1">Catalyzes the reduction of 1-pyrroline-5-carboxylate (PCA) to L-proline.</text>
</comment>
<comment type="catalytic activity">
    <reaction evidence="1">
        <text>L-proline + NADP(+) = (S)-1-pyrroline-5-carboxylate + NADPH + 2 H(+)</text>
        <dbReference type="Rhea" id="RHEA:14109"/>
        <dbReference type="ChEBI" id="CHEBI:15378"/>
        <dbReference type="ChEBI" id="CHEBI:17388"/>
        <dbReference type="ChEBI" id="CHEBI:57783"/>
        <dbReference type="ChEBI" id="CHEBI:58349"/>
        <dbReference type="ChEBI" id="CHEBI:60039"/>
        <dbReference type="EC" id="1.5.1.2"/>
    </reaction>
</comment>
<comment type="catalytic activity">
    <reaction evidence="1">
        <text>L-proline + NAD(+) = (S)-1-pyrroline-5-carboxylate + NADH + 2 H(+)</text>
        <dbReference type="Rhea" id="RHEA:14105"/>
        <dbReference type="ChEBI" id="CHEBI:15378"/>
        <dbReference type="ChEBI" id="CHEBI:17388"/>
        <dbReference type="ChEBI" id="CHEBI:57540"/>
        <dbReference type="ChEBI" id="CHEBI:57945"/>
        <dbReference type="ChEBI" id="CHEBI:60039"/>
        <dbReference type="EC" id="1.5.1.2"/>
    </reaction>
</comment>
<comment type="pathway">
    <text evidence="1">Amino-acid biosynthesis; L-proline biosynthesis; L-proline from L-glutamate 5-semialdehyde: step 1/1.</text>
</comment>
<comment type="subcellular location">
    <subcellularLocation>
        <location evidence="1">Cytoplasm</location>
    </subcellularLocation>
</comment>
<comment type="similarity">
    <text evidence="1">Belongs to the pyrroline-5-carboxylate reductase family.</text>
</comment>